<organism>
    <name type="scientific">Mycobacterium tuberculosis (strain CDC 1551 / Oshkosh)</name>
    <dbReference type="NCBI Taxonomy" id="83331"/>
    <lineage>
        <taxon>Bacteria</taxon>
        <taxon>Bacillati</taxon>
        <taxon>Actinomycetota</taxon>
        <taxon>Actinomycetes</taxon>
        <taxon>Mycobacteriales</taxon>
        <taxon>Mycobacteriaceae</taxon>
        <taxon>Mycobacterium</taxon>
        <taxon>Mycobacterium tuberculosis complex</taxon>
    </lineage>
</organism>
<dbReference type="EMBL" id="AE000516">
    <property type="protein sequence ID" value="AAK48156.1"/>
    <property type="molecule type" value="Genomic_DNA"/>
</dbReference>
<dbReference type="PIR" id="H70791">
    <property type="entry name" value="H70791"/>
</dbReference>
<dbReference type="RefSeq" id="WP_003419762.1">
    <property type="nucleotide sequence ID" value="NZ_KK341227.1"/>
</dbReference>
<dbReference type="SMR" id="P9WGE0"/>
<dbReference type="KEGG" id="mtc:MT3789"/>
<dbReference type="PATRIC" id="fig|83331.31.peg.4080"/>
<dbReference type="HOGENOM" id="CLU_115403_3_1_11"/>
<dbReference type="Proteomes" id="UP000001020">
    <property type="component" value="Chromosome"/>
</dbReference>
<dbReference type="GO" id="GO:0043856">
    <property type="term" value="F:anti-sigma factor antagonist activity"/>
    <property type="evidence" value="ECO:0007669"/>
    <property type="project" value="InterPro"/>
</dbReference>
<dbReference type="CDD" id="cd07043">
    <property type="entry name" value="STAS_anti-anti-sigma_factors"/>
    <property type="match status" value="1"/>
</dbReference>
<dbReference type="Gene3D" id="3.30.750.24">
    <property type="entry name" value="STAS domain"/>
    <property type="match status" value="1"/>
</dbReference>
<dbReference type="InterPro" id="IPR003658">
    <property type="entry name" value="Anti-sigma_ant"/>
</dbReference>
<dbReference type="InterPro" id="IPR002645">
    <property type="entry name" value="STAS_dom"/>
</dbReference>
<dbReference type="InterPro" id="IPR036513">
    <property type="entry name" value="STAS_dom_sf"/>
</dbReference>
<dbReference type="NCBIfam" id="TIGR00377">
    <property type="entry name" value="ant_ant_sig"/>
    <property type="match status" value="1"/>
</dbReference>
<dbReference type="PANTHER" id="PTHR33495">
    <property type="entry name" value="ANTI-SIGMA FACTOR ANTAGONIST TM_1081-RELATED-RELATED"/>
    <property type="match status" value="1"/>
</dbReference>
<dbReference type="PANTHER" id="PTHR33495:SF13">
    <property type="entry name" value="ANTI-SIGMA-F FACTOR ANTAGONIST RSFB"/>
    <property type="match status" value="1"/>
</dbReference>
<dbReference type="Pfam" id="PF01740">
    <property type="entry name" value="STAS"/>
    <property type="match status" value="1"/>
</dbReference>
<dbReference type="SUPFAM" id="SSF52091">
    <property type="entry name" value="SpoIIaa-like"/>
    <property type="match status" value="1"/>
</dbReference>
<dbReference type="PROSITE" id="PS50801">
    <property type="entry name" value="STAS"/>
    <property type="match status" value="1"/>
</dbReference>
<sequence length="122" mass="12651">MSAPDSITVTVADHNGVAVLSIGGEIDLITAAALEEAIGEVVADNPTALVIDLSAVEFLGSVGLKILAATSEKIGQSVKFGVVARGSVTRRPIHLMGLDKTFRLFSTLHDALTGVRGGRIDR</sequence>
<protein>
    <recommendedName>
        <fullName>Anti-sigma-F factor antagonist RsfB</fullName>
    </recommendedName>
    <alternativeName>
        <fullName>Anti-anti-sigma F factor RsfB</fullName>
    </alternativeName>
</protein>
<keyword id="KW-0597">Phosphoprotein</keyword>
<keyword id="KW-1185">Reference proteome</keyword>
<keyword id="KW-0804">Transcription</keyword>
<keyword id="KW-0805">Transcription regulation</keyword>
<accession>P9WGE0</accession>
<accession>F2GFD0</accession>
<accession>O69655</accession>
<accession>Q7D525</accession>
<feature type="chain" id="PRO_0000428378" description="Anti-sigma-F factor antagonist RsfB">
    <location>
        <begin position="1"/>
        <end position="122"/>
    </location>
</feature>
<feature type="domain" description="STAS" evidence="3">
    <location>
        <begin position="7"/>
        <end position="115"/>
    </location>
</feature>
<feature type="modified residue" description="Phosphoserine" evidence="2">
    <location>
        <position position="61"/>
    </location>
</feature>
<proteinExistence type="inferred from homology"/>
<evidence type="ECO:0000250" key="1"/>
<evidence type="ECO:0000255" key="2"/>
<evidence type="ECO:0000255" key="3">
    <source>
        <dbReference type="PROSITE-ProRule" id="PRU00198"/>
    </source>
</evidence>
<evidence type="ECO:0000305" key="4"/>
<comment type="function">
    <text evidence="1">Positive regulator of sigma-F (SigF) activity. Binds to anti-sigma-F factor RsbW (UsfX) preventing its binding to SigF, thus activating transcription (By similarity).</text>
</comment>
<comment type="subunit">
    <text evidence="1">Interacts with anti-sigma-F factor RsbW (UsfX). Its phosphorylation may prevent this interaction (By similarity).</text>
</comment>
<comment type="PTM">
    <text evidence="1">Putative phosphorylation on Ser-61 may prevent interaction with RsbW.</text>
</comment>
<comment type="similarity">
    <text evidence="4">Belongs to the anti-sigma-factor antagonist family.</text>
</comment>
<gene>
    <name type="primary">rsfB</name>
    <name type="ordered locus">MT3789</name>
</gene>
<reference key="1">
    <citation type="journal article" date="2002" name="J. Bacteriol.">
        <title>Whole-genome comparison of Mycobacterium tuberculosis clinical and laboratory strains.</title>
        <authorList>
            <person name="Fleischmann R.D."/>
            <person name="Alland D."/>
            <person name="Eisen J.A."/>
            <person name="Carpenter L."/>
            <person name="White O."/>
            <person name="Peterson J.D."/>
            <person name="DeBoy R.T."/>
            <person name="Dodson R.J."/>
            <person name="Gwinn M.L."/>
            <person name="Haft D.H."/>
            <person name="Hickey E.K."/>
            <person name="Kolonay J.F."/>
            <person name="Nelson W.C."/>
            <person name="Umayam L.A."/>
            <person name="Ermolaeva M.D."/>
            <person name="Salzberg S.L."/>
            <person name="Delcher A."/>
            <person name="Utterback T.R."/>
            <person name="Weidman J.F."/>
            <person name="Khouri H.M."/>
            <person name="Gill J."/>
            <person name="Mikula A."/>
            <person name="Bishai W."/>
            <person name="Jacobs W.R. Jr."/>
            <person name="Venter J.C."/>
            <person name="Fraser C.M."/>
        </authorList>
    </citation>
    <scope>NUCLEOTIDE SEQUENCE [LARGE SCALE GENOMIC DNA]</scope>
    <source>
        <strain>CDC 1551 / Oshkosh</strain>
    </source>
</reference>
<name>RSFB_MYCTO</name>